<comment type="similarity">
    <text evidence="1">Belongs to the UPF0236 family.</text>
</comment>
<sequence length="450" mass="51274">MTIVTEIGKILKTSKHLSELESEMMSLMSEVFTDSLAQCLERLDKELISDYLVQGWEIDRIESRQVTFLFGEVSFKRHRLRKEGEKSFLPLDKALGLEARQRYSPSFMEKVSLLATGMTFRQASASLELLTGRTMSHQTIQGITQRVAEAIGKSEVPPSEELRKPKVLYIEGDGVWIGSQSKGKHHEFKRGFIHEGVDRTGKRGQLINPVYFGCFGTSRDLFQEIGDYLQTHYDLRETIIIANSDGGSGYEASKFEEILGRYGSFNYCLDSYHVMRYITGKLGFDKGLQKSIRQAVKDYNKSELELLLDTAESCLEDDKQLEKLLAVKSYLLSHWEAIKPLKLRDLGVTDGVGVCESGHRFYTNRLKRQGRNWTKSGAESMVILMTAQRNGLFEVYYRNSYPFRTFSSEIKINMRKLLQKGQHDQHVIPSATIPLNGATSSPIGQMKKWI</sequence>
<protein>
    <recommendedName>
        <fullName>UPF0236 protein in vanSb 3'region</fullName>
    </recommendedName>
</protein>
<accession>Q8KRA0</accession>
<organism>
    <name type="scientific">Streptococcus gallolyticus</name>
    <name type="common">Streptococcus bovis biotype I</name>
    <dbReference type="NCBI Taxonomy" id="53354"/>
    <lineage>
        <taxon>Bacteria</taxon>
        <taxon>Bacillati</taxon>
        <taxon>Bacillota</taxon>
        <taxon>Bacilli</taxon>
        <taxon>Lactobacillales</taxon>
        <taxon>Streptococcaceae</taxon>
        <taxon>Streptococcus</taxon>
    </lineage>
</organism>
<evidence type="ECO:0000305" key="1"/>
<feature type="chain" id="PRO_0000220414" description="UPF0236 protein in vanSb 3'region">
    <location>
        <begin position="1"/>
        <end position="450"/>
    </location>
</feature>
<reference key="1">
    <citation type="submission" date="2001-05" db="EMBL/GenBank/DDBJ databases">
        <title>vanB2 operons linked to Tn5382-like elements in Streptococcus strains from veal calves.</title>
        <authorList>
            <person name="Dahl K.H."/>
            <person name="Sundsfjord A."/>
        </authorList>
    </citation>
    <scope>NUCLEOTIDE SEQUENCE [GENOMIC DNA]</scope>
</reference>
<proteinExistence type="inferred from homology"/>
<name>YVAB_STRGY</name>
<dbReference type="EMBL" id="AY035712">
    <property type="protein sequence ID" value="AAL07298.1"/>
    <property type="molecule type" value="Genomic_DNA"/>
</dbReference>
<dbReference type="SMR" id="Q8KRA0"/>
<dbReference type="InterPro" id="IPR009620">
    <property type="entry name" value="UPF0236"/>
</dbReference>
<dbReference type="NCBIfam" id="NF033529">
    <property type="entry name" value="transpos_ISLre2"/>
    <property type="match status" value="1"/>
</dbReference>
<dbReference type="Pfam" id="PF06782">
    <property type="entry name" value="UPF0236"/>
    <property type="match status" value="1"/>
</dbReference>